<dbReference type="EC" id="2.7.11.33" evidence="1"/>
<dbReference type="EC" id="2.7.4.28" evidence="1"/>
<dbReference type="EMBL" id="CP000462">
    <property type="protein sequence ID" value="ABK36248.1"/>
    <property type="molecule type" value="Genomic_DNA"/>
</dbReference>
<dbReference type="RefSeq" id="WP_011706506.1">
    <property type="nucleotide sequence ID" value="NC_008570.1"/>
</dbReference>
<dbReference type="RefSeq" id="YP_857200.1">
    <property type="nucleotide sequence ID" value="NC_008570.1"/>
</dbReference>
<dbReference type="SMR" id="A0KLP9"/>
<dbReference type="STRING" id="380703.AHA_2692"/>
<dbReference type="EnsemblBacteria" id="ABK36248">
    <property type="protein sequence ID" value="ABK36248"/>
    <property type="gene ID" value="AHA_2692"/>
</dbReference>
<dbReference type="GeneID" id="4489970"/>
<dbReference type="KEGG" id="aha:AHA_2692"/>
<dbReference type="PATRIC" id="fig|380703.7.peg.2698"/>
<dbReference type="eggNOG" id="COG1806">
    <property type="taxonomic scope" value="Bacteria"/>
</dbReference>
<dbReference type="HOGENOM" id="CLU_046206_1_0_6"/>
<dbReference type="OrthoDB" id="9782201at2"/>
<dbReference type="Proteomes" id="UP000000756">
    <property type="component" value="Chromosome"/>
</dbReference>
<dbReference type="GO" id="GO:0043531">
    <property type="term" value="F:ADP binding"/>
    <property type="evidence" value="ECO:0007669"/>
    <property type="project" value="UniProtKB-UniRule"/>
</dbReference>
<dbReference type="GO" id="GO:0005524">
    <property type="term" value="F:ATP binding"/>
    <property type="evidence" value="ECO:0007669"/>
    <property type="project" value="InterPro"/>
</dbReference>
<dbReference type="GO" id="GO:0016776">
    <property type="term" value="F:phosphotransferase activity, phosphate group as acceptor"/>
    <property type="evidence" value="ECO:0007669"/>
    <property type="project" value="UniProtKB-UniRule"/>
</dbReference>
<dbReference type="GO" id="GO:0004674">
    <property type="term" value="F:protein serine/threonine kinase activity"/>
    <property type="evidence" value="ECO:0007669"/>
    <property type="project" value="UniProtKB-UniRule"/>
</dbReference>
<dbReference type="HAMAP" id="MF_01062">
    <property type="entry name" value="PSRP"/>
    <property type="match status" value="1"/>
</dbReference>
<dbReference type="InterPro" id="IPR005177">
    <property type="entry name" value="Kinase-pyrophosphorylase"/>
</dbReference>
<dbReference type="InterPro" id="IPR026530">
    <property type="entry name" value="PSRP"/>
</dbReference>
<dbReference type="NCBIfam" id="NF003742">
    <property type="entry name" value="PRK05339.1"/>
    <property type="match status" value="1"/>
</dbReference>
<dbReference type="PANTHER" id="PTHR31756">
    <property type="entry name" value="PYRUVATE, PHOSPHATE DIKINASE REGULATORY PROTEIN 1, CHLOROPLASTIC"/>
    <property type="match status" value="1"/>
</dbReference>
<dbReference type="PANTHER" id="PTHR31756:SF3">
    <property type="entry name" value="PYRUVATE, PHOSPHATE DIKINASE REGULATORY PROTEIN 1, CHLOROPLASTIC"/>
    <property type="match status" value="1"/>
</dbReference>
<dbReference type="Pfam" id="PF03618">
    <property type="entry name" value="Kinase-PPPase"/>
    <property type="match status" value="1"/>
</dbReference>
<keyword id="KW-0418">Kinase</keyword>
<keyword id="KW-0547">Nucleotide-binding</keyword>
<keyword id="KW-1185">Reference proteome</keyword>
<keyword id="KW-0723">Serine/threonine-protein kinase</keyword>
<keyword id="KW-0808">Transferase</keyword>
<name>PSRP_AERHH</name>
<feature type="chain" id="PRO_0000316629" description="Putative phosphoenolpyruvate synthase regulatory protein">
    <location>
        <begin position="1"/>
        <end position="270"/>
    </location>
</feature>
<feature type="binding site" evidence="1">
    <location>
        <begin position="150"/>
        <end position="157"/>
    </location>
    <ligand>
        <name>ADP</name>
        <dbReference type="ChEBI" id="CHEBI:456216"/>
    </ligand>
</feature>
<sequence length="270" mass="30878">MHTVFYVSDGTAITAEVFGHAVLSQFPLAFEQITIPFVETLEKARQVRMRIDEQFRQTGVRPILFHTIVDHQVREEVLKAQASSHDFLNTFVSPLEHELGVKAEPRLHRTHGMENRKLYDDRIEAVNFALANDDGITTKEYDEADIILIGVSRCGKTPTSLYLALQFGIRAANYPFIEQDMGVLDLPAALKANRHKLFGLTIAPQRLHEIRNQRRANSRYSSLEQCEQELACVERLFRQEAIRFLDTSSHSVEEISAKILEATGLRRQLY</sequence>
<protein>
    <recommendedName>
        <fullName evidence="1">Putative phosphoenolpyruvate synthase regulatory protein</fullName>
        <shortName evidence="1">PEP synthase regulatory protein</shortName>
        <shortName evidence="1">PSRP</shortName>
        <ecNumber evidence="1">2.7.11.33</ecNumber>
        <ecNumber evidence="1">2.7.4.28</ecNumber>
    </recommendedName>
    <alternativeName>
        <fullName evidence="1">Pyruvate, water dikinase regulatory protein</fullName>
    </alternativeName>
</protein>
<organism>
    <name type="scientific">Aeromonas hydrophila subsp. hydrophila (strain ATCC 7966 / DSM 30187 / BCRC 13018 / CCUG 14551 / JCM 1027 / KCTC 2358 / NCIMB 9240 / NCTC 8049)</name>
    <dbReference type="NCBI Taxonomy" id="380703"/>
    <lineage>
        <taxon>Bacteria</taxon>
        <taxon>Pseudomonadati</taxon>
        <taxon>Pseudomonadota</taxon>
        <taxon>Gammaproteobacteria</taxon>
        <taxon>Aeromonadales</taxon>
        <taxon>Aeromonadaceae</taxon>
        <taxon>Aeromonas</taxon>
    </lineage>
</organism>
<gene>
    <name type="ordered locus">AHA_2692</name>
</gene>
<evidence type="ECO:0000255" key="1">
    <source>
        <dbReference type="HAMAP-Rule" id="MF_01062"/>
    </source>
</evidence>
<reference key="1">
    <citation type="journal article" date="2006" name="J. Bacteriol.">
        <title>Genome sequence of Aeromonas hydrophila ATCC 7966T: jack of all trades.</title>
        <authorList>
            <person name="Seshadri R."/>
            <person name="Joseph S.W."/>
            <person name="Chopra A.K."/>
            <person name="Sha J."/>
            <person name="Shaw J."/>
            <person name="Graf J."/>
            <person name="Haft D.H."/>
            <person name="Wu M."/>
            <person name="Ren Q."/>
            <person name="Rosovitz M.J."/>
            <person name="Madupu R."/>
            <person name="Tallon L."/>
            <person name="Kim M."/>
            <person name="Jin S."/>
            <person name="Vuong H."/>
            <person name="Stine O.C."/>
            <person name="Ali A."/>
            <person name="Horneman A.J."/>
            <person name="Heidelberg J.F."/>
        </authorList>
    </citation>
    <scope>NUCLEOTIDE SEQUENCE [LARGE SCALE GENOMIC DNA]</scope>
    <source>
        <strain>ATCC 7966 / DSM 30187 / BCRC 13018 / CCUG 14551 / JCM 1027 / KCTC 2358 / NCIMB 9240 / NCTC 8049</strain>
    </source>
</reference>
<accession>A0KLP9</accession>
<proteinExistence type="inferred from homology"/>
<comment type="function">
    <text evidence="1">Bifunctional serine/threonine kinase and phosphorylase involved in the regulation of the phosphoenolpyruvate synthase (PEPS) by catalyzing its phosphorylation/dephosphorylation.</text>
</comment>
<comment type="catalytic activity">
    <reaction evidence="1">
        <text>[pyruvate, water dikinase] + ADP = [pyruvate, water dikinase]-phosphate + AMP + H(+)</text>
        <dbReference type="Rhea" id="RHEA:46020"/>
        <dbReference type="Rhea" id="RHEA-COMP:11425"/>
        <dbReference type="Rhea" id="RHEA-COMP:11426"/>
        <dbReference type="ChEBI" id="CHEBI:15378"/>
        <dbReference type="ChEBI" id="CHEBI:43176"/>
        <dbReference type="ChEBI" id="CHEBI:68546"/>
        <dbReference type="ChEBI" id="CHEBI:456215"/>
        <dbReference type="ChEBI" id="CHEBI:456216"/>
        <dbReference type="EC" id="2.7.11.33"/>
    </reaction>
</comment>
<comment type="catalytic activity">
    <reaction evidence="1">
        <text>[pyruvate, water dikinase]-phosphate + phosphate + H(+) = [pyruvate, water dikinase] + diphosphate</text>
        <dbReference type="Rhea" id="RHEA:48580"/>
        <dbReference type="Rhea" id="RHEA-COMP:11425"/>
        <dbReference type="Rhea" id="RHEA-COMP:11426"/>
        <dbReference type="ChEBI" id="CHEBI:15378"/>
        <dbReference type="ChEBI" id="CHEBI:33019"/>
        <dbReference type="ChEBI" id="CHEBI:43176"/>
        <dbReference type="ChEBI" id="CHEBI:43474"/>
        <dbReference type="ChEBI" id="CHEBI:68546"/>
        <dbReference type="EC" id="2.7.4.28"/>
    </reaction>
</comment>
<comment type="similarity">
    <text evidence="1">Belongs to the pyruvate, phosphate/water dikinase regulatory protein family. PSRP subfamily.</text>
</comment>